<gene>
    <name type="primary">ndmB</name>
</gene>
<evidence type="ECO:0000255" key="1">
    <source>
        <dbReference type="PROSITE-ProRule" id="PRU00628"/>
    </source>
</evidence>
<evidence type="ECO:0000269" key="2">
    <source>
    </source>
</evidence>
<evidence type="ECO:0000269" key="3">
    <source>
    </source>
</evidence>
<evidence type="ECO:0007829" key="4">
    <source>
        <dbReference type="PDB" id="6ICL"/>
    </source>
</evidence>
<proteinExistence type="evidence at protein level"/>
<accession>H9N290</accession>
<reference key="1">
    <citation type="journal article" date="2012" name="J. Bacteriol.">
        <title>Novel, highly specific N-demethylases enable bacteria to live on caffeine and related purine alkaloids.</title>
        <authorList>
            <person name="Summers R.M."/>
            <person name="Louie T.M."/>
            <person name="Yu C.L."/>
            <person name="Gakhar L."/>
            <person name="Louie K.C."/>
            <person name="Subramanian M."/>
        </authorList>
    </citation>
    <scope>NUCLEOTIDE SEQUENCE [GENOMIC DNA]</scope>
    <scope>FUNCTION</scope>
    <scope>CATALYTIC ACTIVITY</scope>
    <scope>BIOPHYSICOCHEMICAL PROPERTIES</scope>
    <scope>SUBSTRATE SPECIFICITY</scope>
    <scope>COFACTOR</scope>
    <source>
        <strain>CBB5</strain>
    </source>
</reference>
<reference key="2">
    <citation type="journal article" date="2011" name="Microbiology">
        <title>Characterization of a broad-specificity non-haem iron N-demethylase from Pseudomonas putida CBB5 capable of utilizing several purine alkaloids as sole carbon and nitrogen source.</title>
        <authorList>
            <person name="Summers R.M."/>
            <person name="Louie T.M."/>
            <person name="Yu C.L."/>
            <person name="Subramanian M."/>
        </authorList>
    </citation>
    <scope>PROTEIN SEQUENCE OF 1-25</scope>
    <scope>FUNCTION</scope>
    <scope>BIOPHYSICOCHEMICAL PROPERTIES</scope>
    <scope>COFACTOR</scope>
    <scope>SUBSTRATE SPECIFICITY</scope>
    <source>
        <strain>CBB5</strain>
    </source>
</reference>
<dbReference type="EC" id="1.14.13.179"/>
<dbReference type="EMBL" id="JQ061128">
    <property type="protein sequence ID" value="AFD03117.1"/>
    <property type="molecule type" value="Genomic_DNA"/>
</dbReference>
<dbReference type="RefSeq" id="WP_046819639.1">
    <property type="nucleotide sequence ID" value="NZ_JTEN01000129.1"/>
</dbReference>
<dbReference type="PDB" id="6ICL">
    <property type="method" value="X-ray"/>
    <property type="resolution" value="2.10 A"/>
    <property type="chains" value="A=1-355"/>
</dbReference>
<dbReference type="PDBsum" id="6ICL"/>
<dbReference type="SASBDB" id="H9N290"/>
<dbReference type="SMR" id="H9N290"/>
<dbReference type="KEGG" id="ag:AFD03117"/>
<dbReference type="BioCyc" id="MetaCyc:MONOMER-17180"/>
<dbReference type="BRENDA" id="1.14.13.179">
    <property type="organism ID" value="5092"/>
</dbReference>
<dbReference type="GO" id="GO:0051537">
    <property type="term" value="F:2 iron, 2 sulfur cluster binding"/>
    <property type="evidence" value="ECO:0000314"/>
    <property type="project" value="UniProtKB"/>
</dbReference>
<dbReference type="GO" id="GO:0032451">
    <property type="term" value="F:demethylase activity"/>
    <property type="evidence" value="ECO:0000314"/>
    <property type="project" value="UniProtKB"/>
</dbReference>
<dbReference type="GO" id="GO:0046872">
    <property type="term" value="F:metal ion binding"/>
    <property type="evidence" value="ECO:0007669"/>
    <property type="project" value="UniProtKB-KW"/>
</dbReference>
<dbReference type="GO" id="GO:0016491">
    <property type="term" value="F:oxidoreductase activity"/>
    <property type="evidence" value="ECO:0007669"/>
    <property type="project" value="UniProtKB-KW"/>
</dbReference>
<dbReference type="GO" id="GO:0009822">
    <property type="term" value="P:alkaloid catabolic process"/>
    <property type="evidence" value="ECO:0000314"/>
    <property type="project" value="UniProtKB"/>
</dbReference>
<dbReference type="FunFam" id="2.102.10.10:FF:000044">
    <property type="entry name" value="Methylxanthine N1-demethylase NdmA"/>
    <property type="match status" value="1"/>
</dbReference>
<dbReference type="Gene3D" id="3.90.380.10">
    <property type="entry name" value="Naphthalene 1,2-dioxygenase Alpha Subunit, Chain A, domain 1"/>
    <property type="match status" value="1"/>
</dbReference>
<dbReference type="Gene3D" id="2.102.10.10">
    <property type="entry name" value="Rieske [2Fe-2S] iron-sulphur domain"/>
    <property type="match status" value="1"/>
</dbReference>
<dbReference type="InterPro" id="IPR050584">
    <property type="entry name" value="Cholesterol_7-desaturase"/>
</dbReference>
<dbReference type="InterPro" id="IPR017941">
    <property type="entry name" value="Rieske_2Fe-2S"/>
</dbReference>
<dbReference type="InterPro" id="IPR036922">
    <property type="entry name" value="Rieske_2Fe-2S_sf"/>
</dbReference>
<dbReference type="InterPro" id="IPR044043">
    <property type="entry name" value="VanA_C_cat"/>
</dbReference>
<dbReference type="PANTHER" id="PTHR21266:SF60">
    <property type="entry name" value="3-KETOSTEROID-9-ALPHA-MONOOXYGENASE, OXYGENASE COMPONENT"/>
    <property type="match status" value="1"/>
</dbReference>
<dbReference type="PANTHER" id="PTHR21266">
    <property type="entry name" value="IRON-SULFUR DOMAIN CONTAINING PROTEIN"/>
    <property type="match status" value="1"/>
</dbReference>
<dbReference type="Pfam" id="PF00355">
    <property type="entry name" value="Rieske"/>
    <property type="match status" value="1"/>
</dbReference>
<dbReference type="Pfam" id="PF19112">
    <property type="entry name" value="VanA_C"/>
    <property type="match status" value="1"/>
</dbReference>
<dbReference type="SUPFAM" id="SSF55961">
    <property type="entry name" value="Bet v1-like"/>
    <property type="match status" value="1"/>
</dbReference>
<dbReference type="SUPFAM" id="SSF50022">
    <property type="entry name" value="ISP domain"/>
    <property type="match status" value="1"/>
</dbReference>
<dbReference type="PROSITE" id="PS51296">
    <property type="entry name" value="RIESKE"/>
    <property type="match status" value="1"/>
</dbReference>
<protein>
    <recommendedName>
        <fullName>Methylxanthine N3-demethylase NdmB</fullName>
        <ecNumber>1.14.13.179</ecNumber>
    </recommendedName>
    <alternativeName>
        <fullName>3-methylxanthine demethylase</fullName>
    </alternativeName>
</protein>
<sequence>MKEQLKPLLEDKTYLRHFWHPVCTLNEFERANASGHGPMGVTLLGEKLVLARLNSKIIAAADRCAHRSAQLSIGRVCSNAGKDYLECPYHGWRYDEAGACQLIPACPDKSISPRAKISSFDCEVKYDIVWVRLDNSFDCTQIPYLSDFDNPDMQVIVADSYIWETVAERRWENFTDFSHFAFVHPGTLYDPFFASHPTVYVNRVDGELQFKLAPPREMKGIPPEAPMGDFTYRCTMPYSVNLEIKLWKDDSRFVLWTTASPVDNKSCRNFMIIVREKDNQPDHMHLAFQKRVLDEDQPVIESQWPLEIQTSEVSVATDKISVQFRKWHKELSLSAVEGREAFRDSVLTNVIEEEQ</sequence>
<organism>
    <name type="scientific">Pseudomonas putida</name>
    <name type="common">Arthrobacter siderocapsulatus</name>
    <dbReference type="NCBI Taxonomy" id="303"/>
    <lineage>
        <taxon>Bacteria</taxon>
        <taxon>Pseudomonadati</taxon>
        <taxon>Pseudomonadota</taxon>
        <taxon>Gammaproteobacteria</taxon>
        <taxon>Pseudomonadales</taxon>
        <taxon>Pseudomonadaceae</taxon>
        <taxon>Pseudomonas</taxon>
    </lineage>
</organism>
<name>NDMB_PSEPU</name>
<feature type="chain" id="PRO_0000422371" description="Methylxanthine N3-demethylase NdmB">
    <location>
        <begin position="1"/>
        <end position="355"/>
    </location>
</feature>
<feature type="domain" description="Rieske" evidence="1">
    <location>
        <begin position="19"/>
        <end position="131"/>
    </location>
</feature>
<feature type="binding site" evidence="1">
    <location>
        <position position="64"/>
    </location>
    <ligand>
        <name>[2Fe-2S] cluster</name>
        <dbReference type="ChEBI" id="CHEBI:190135"/>
    </ligand>
</feature>
<feature type="binding site" evidence="1">
    <location>
        <position position="66"/>
    </location>
    <ligand>
        <name>[2Fe-2S] cluster</name>
        <dbReference type="ChEBI" id="CHEBI:190135"/>
    </ligand>
</feature>
<feature type="binding site" evidence="1">
    <location>
        <position position="87"/>
    </location>
    <ligand>
        <name>[2Fe-2S] cluster</name>
        <dbReference type="ChEBI" id="CHEBI:190135"/>
    </ligand>
</feature>
<feature type="binding site" evidence="1">
    <location>
        <position position="90"/>
    </location>
    <ligand>
        <name>[2Fe-2S] cluster</name>
        <dbReference type="ChEBI" id="CHEBI:190135"/>
    </ligand>
</feature>
<feature type="helix" evidence="4">
    <location>
        <begin position="13"/>
        <end position="17"/>
    </location>
</feature>
<feature type="strand" evidence="4">
    <location>
        <begin position="18"/>
        <end position="24"/>
    </location>
</feature>
<feature type="helix" evidence="4">
    <location>
        <begin position="25"/>
        <end position="30"/>
    </location>
</feature>
<feature type="strand" evidence="4">
    <location>
        <begin position="39"/>
        <end position="43"/>
    </location>
</feature>
<feature type="strand" evidence="4">
    <location>
        <begin position="46"/>
        <end position="53"/>
    </location>
</feature>
<feature type="strand" evidence="4">
    <location>
        <begin position="56"/>
        <end position="63"/>
    </location>
</feature>
<feature type="turn" evidence="4">
    <location>
        <begin position="65"/>
        <end position="67"/>
    </location>
</feature>
<feature type="helix" evidence="4">
    <location>
        <begin position="71"/>
        <end position="73"/>
    </location>
</feature>
<feature type="strand" evidence="4">
    <location>
        <begin position="74"/>
        <end position="79"/>
    </location>
</feature>
<feature type="strand" evidence="4">
    <location>
        <begin position="82"/>
        <end position="86"/>
    </location>
</feature>
<feature type="turn" evidence="4">
    <location>
        <begin position="88"/>
        <end position="90"/>
    </location>
</feature>
<feature type="strand" evidence="4">
    <location>
        <begin position="98"/>
        <end position="102"/>
    </location>
</feature>
<feature type="strand" evidence="4">
    <location>
        <begin position="119"/>
        <end position="125"/>
    </location>
</feature>
<feature type="strand" evidence="4">
    <location>
        <begin position="128"/>
        <end position="133"/>
    </location>
</feature>
<feature type="strand" evidence="4">
    <location>
        <begin position="153"/>
        <end position="157"/>
    </location>
</feature>
<feature type="strand" evidence="4">
    <location>
        <begin position="161"/>
        <end position="165"/>
    </location>
</feature>
<feature type="helix" evidence="4">
    <location>
        <begin position="167"/>
        <end position="174"/>
    </location>
</feature>
<feature type="helix" evidence="4">
    <location>
        <begin position="180"/>
        <end position="183"/>
    </location>
</feature>
<feature type="turn" evidence="4">
    <location>
        <begin position="185"/>
        <end position="187"/>
    </location>
</feature>
<feature type="turn" evidence="4">
    <location>
        <begin position="191"/>
        <end position="194"/>
    </location>
</feature>
<feature type="strand" evidence="4">
    <location>
        <begin position="201"/>
        <end position="204"/>
    </location>
</feature>
<feature type="strand" evidence="4">
    <location>
        <begin position="207"/>
        <end position="212"/>
    </location>
</feature>
<feature type="strand" evidence="4">
    <location>
        <begin position="228"/>
        <end position="235"/>
    </location>
</feature>
<feature type="turn" evidence="4">
    <location>
        <begin position="236"/>
        <end position="238"/>
    </location>
</feature>
<feature type="strand" evidence="4">
    <location>
        <begin position="239"/>
        <end position="249"/>
    </location>
</feature>
<feature type="strand" evidence="4">
    <location>
        <begin position="252"/>
        <end position="263"/>
    </location>
</feature>
<feature type="strand" evidence="4">
    <location>
        <begin position="266"/>
        <end position="276"/>
    </location>
</feature>
<feature type="helix" evidence="4">
    <location>
        <begin position="282"/>
        <end position="301"/>
    </location>
</feature>
<feature type="strand" evidence="4">
    <location>
        <begin position="304"/>
        <end position="307"/>
    </location>
</feature>
<feature type="helix" evidence="4">
    <location>
        <begin position="316"/>
        <end position="318"/>
    </location>
</feature>
<feature type="helix" evidence="4">
    <location>
        <begin position="319"/>
        <end position="337"/>
    </location>
</feature>
<feature type="helix" evidence="4">
    <location>
        <begin position="339"/>
        <end position="347"/>
    </location>
</feature>
<comment type="function">
    <text evidence="2 3">Involved in the caffeine degradation, which is the essential first step for assimilating the carbon and nitrogen in caffeine. Catalyzes the N3-demethylation of theobromine to produce 7-methylxanthine and formaldehyde. Also catalyzes the N3-demethylation of 3-methylxanthine, caffeine, and theophylline to xanthine, paraxanthine, and 1-methylxanthine, respectively. NADH is the preferred substrate.</text>
</comment>
<comment type="catalytic activity">
    <reaction evidence="3">
        <text>theobromine + NADH + O2 + H(+) = 7-methylxanthine + formaldehyde + NAD(+) + H2O</text>
        <dbReference type="Rhea" id="RHEA:30319"/>
        <dbReference type="ChEBI" id="CHEBI:15377"/>
        <dbReference type="ChEBI" id="CHEBI:15378"/>
        <dbReference type="ChEBI" id="CHEBI:15379"/>
        <dbReference type="ChEBI" id="CHEBI:16842"/>
        <dbReference type="ChEBI" id="CHEBI:28946"/>
        <dbReference type="ChEBI" id="CHEBI:48991"/>
        <dbReference type="ChEBI" id="CHEBI:57540"/>
        <dbReference type="ChEBI" id="CHEBI:57945"/>
        <dbReference type="EC" id="1.14.13.179"/>
    </reaction>
</comment>
<comment type="catalytic activity">
    <reaction evidence="3">
        <text>theobromine + NADPH + O2 + H(+) = 7-methylxanthine + formaldehyde + NADP(+) + H2O</text>
        <dbReference type="Rhea" id="RHEA:36287"/>
        <dbReference type="ChEBI" id="CHEBI:15377"/>
        <dbReference type="ChEBI" id="CHEBI:15378"/>
        <dbReference type="ChEBI" id="CHEBI:15379"/>
        <dbReference type="ChEBI" id="CHEBI:16842"/>
        <dbReference type="ChEBI" id="CHEBI:28946"/>
        <dbReference type="ChEBI" id="CHEBI:48991"/>
        <dbReference type="ChEBI" id="CHEBI:57783"/>
        <dbReference type="ChEBI" id="CHEBI:58349"/>
        <dbReference type="EC" id="1.14.13.179"/>
    </reaction>
</comment>
<comment type="catalytic activity">
    <reaction evidence="3">
        <text>3-methylxanthine + NADH + O2 + H(+) = xanthine + formaldehyde + NAD(+) + H2O</text>
        <dbReference type="Rhea" id="RHEA:30447"/>
        <dbReference type="ChEBI" id="CHEBI:15377"/>
        <dbReference type="ChEBI" id="CHEBI:15378"/>
        <dbReference type="ChEBI" id="CHEBI:15379"/>
        <dbReference type="ChEBI" id="CHEBI:16842"/>
        <dbReference type="ChEBI" id="CHEBI:17712"/>
        <dbReference type="ChEBI" id="CHEBI:57540"/>
        <dbReference type="ChEBI" id="CHEBI:57945"/>
        <dbReference type="ChEBI" id="CHEBI:62208"/>
        <dbReference type="EC" id="1.14.13.179"/>
    </reaction>
</comment>
<comment type="catalytic activity">
    <reaction evidence="3">
        <text>3-methylxanthine + NADPH + O2 + H(+) = xanthine + formaldehyde + NADP(+) + H2O</text>
        <dbReference type="Rhea" id="RHEA:36291"/>
        <dbReference type="ChEBI" id="CHEBI:15377"/>
        <dbReference type="ChEBI" id="CHEBI:15378"/>
        <dbReference type="ChEBI" id="CHEBI:15379"/>
        <dbReference type="ChEBI" id="CHEBI:16842"/>
        <dbReference type="ChEBI" id="CHEBI:17712"/>
        <dbReference type="ChEBI" id="CHEBI:57783"/>
        <dbReference type="ChEBI" id="CHEBI:58349"/>
        <dbReference type="ChEBI" id="CHEBI:62208"/>
        <dbReference type="EC" id="1.14.13.179"/>
    </reaction>
</comment>
<comment type="cofactor">
    <cofactor evidence="1 2 3">
        <name>[2Fe-2S] cluster</name>
        <dbReference type="ChEBI" id="CHEBI:190135"/>
    </cofactor>
    <text evidence="1 2 3">Binds 1 [2Fe-2S] cluster per subunit.</text>
</comment>
<comment type="biophysicochemical properties">
    <kinetics>
        <KM evidence="2 3">22 uM for 3-methylxanthine (at pH 7.5 and 30 degrees Celsius)</KM>
        <KM evidence="2 3">25 uM for theobromine (at pH 7.5 and 30 degrees Celsius)</KM>
        <KM evidence="2 3">42 uM for caffeine (at pH 7.5 and 30 degrees Celsius)</KM>
        <KM evidence="2 3">170 uM for theophylline (at pH 7.5 and 30 degrees Celsius)</KM>
        <text>kcat is 46 min(-1) for theobromine (at pH 7.5 and 30 degrees Celsius).</text>
    </kinetics>
    <phDependence>
        <text evidence="2 3">Optimum pH is 7.5.</text>
    </phDependence>
    <temperatureDependence>
        <text evidence="2 3">Optimum temperature is 30 degrees Celsius.</text>
    </temperatureDependence>
</comment>
<keyword id="KW-0001">2Fe-2S</keyword>
<keyword id="KW-0002">3D-structure</keyword>
<keyword id="KW-0017">Alkaloid metabolism</keyword>
<keyword id="KW-0903">Direct protein sequencing</keyword>
<keyword id="KW-0408">Iron</keyword>
<keyword id="KW-0411">Iron-sulfur</keyword>
<keyword id="KW-0479">Metal-binding</keyword>
<keyword id="KW-0520">NAD</keyword>
<keyword id="KW-0560">Oxidoreductase</keyword>